<comment type="function">
    <text>Removes 5-oxoproline from various penultimate amino acid residues except L-proline.</text>
</comment>
<comment type="catalytic activity">
    <reaction>
        <text>Release of an N-terminal pyroglutamyl group from a polypeptide, the second amino acid generally not being Pro.</text>
        <dbReference type="EC" id="3.4.19.3"/>
    </reaction>
</comment>
<comment type="subunit">
    <text evidence="1">Homotetramer.</text>
</comment>
<comment type="subcellular location">
    <subcellularLocation>
        <location>Cytoplasm</location>
    </subcellularLocation>
</comment>
<comment type="similarity">
    <text evidence="2">Belongs to the peptidase C15 family.</text>
</comment>
<dbReference type="EC" id="3.4.19.3"/>
<dbReference type="EMBL" id="AJ248287">
    <property type="protein sequence ID" value="CAB50353.1"/>
    <property type="molecule type" value="Genomic_DNA"/>
</dbReference>
<dbReference type="EMBL" id="HE613800">
    <property type="protein sequence ID" value="CCE70894.1"/>
    <property type="molecule type" value="Genomic_DNA"/>
</dbReference>
<dbReference type="PIR" id="D75057">
    <property type="entry name" value="D75057"/>
</dbReference>
<dbReference type="RefSeq" id="WP_010868563.1">
    <property type="nucleotide sequence ID" value="NC_000868.1"/>
</dbReference>
<dbReference type="SMR" id="Q9UYQ9"/>
<dbReference type="STRING" id="272844.PAB1419"/>
<dbReference type="MEROPS" id="C15.001"/>
<dbReference type="KEGG" id="pab:PAB1419"/>
<dbReference type="PATRIC" id="fig|272844.11.peg.1539"/>
<dbReference type="eggNOG" id="arCOG05850">
    <property type="taxonomic scope" value="Archaea"/>
</dbReference>
<dbReference type="HOGENOM" id="CLU_043960_4_0_2"/>
<dbReference type="OrthoDB" id="39672at2157"/>
<dbReference type="PhylomeDB" id="Q9UYQ9"/>
<dbReference type="Proteomes" id="UP000000810">
    <property type="component" value="Chromosome"/>
</dbReference>
<dbReference type="Proteomes" id="UP000009139">
    <property type="component" value="Chromosome"/>
</dbReference>
<dbReference type="GO" id="GO:0005829">
    <property type="term" value="C:cytosol"/>
    <property type="evidence" value="ECO:0007669"/>
    <property type="project" value="InterPro"/>
</dbReference>
<dbReference type="GO" id="GO:0016920">
    <property type="term" value="F:pyroglutamyl-peptidase activity"/>
    <property type="evidence" value="ECO:0007669"/>
    <property type="project" value="UniProtKB-UniRule"/>
</dbReference>
<dbReference type="GO" id="GO:0006508">
    <property type="term" value="P:proteolysis"/>
    <property type="evidence" value="ECO:0007669"/>
    <property type="project" value="UniProtKB-KW"/>
</dbReference>
<dbReference type="CDD" id="cd00501">
    <property type="entry name" value="Peptidase_C15"/>
    <property type="match status" value="1"/>
</dbReference>
<dbReference type="FunFam" id="3.40.630.20:FF:000001">
    <property type="entry name" value="Pyrrolidone-carboxylate peptidase"/>
    <property type="match status" value="1"/>
</dbReference>
<dbReference type="Gene3D" id="3.40.630.20">
    <property type="entry name" value="Peptidase C15, pyroglutamyl peptidase I-like"/>
    <property type="match status" value="1"/>
</dbReference>
<dbReference type="HAMAP" id="MF_00417">
    <property type="entry name" value="Pyrrolid_peptidase"/>
    <property type="match status" value="1"/>
</dbReference>
<dbReference type="InterPro" id="IPR000816">
    <property type="entry name" value="Peptidase_C15"/>
</dbReference>
<dbReference type="InterPro" id="IPR016125">
    <property type="entry name" value="Peptidase_C15-like"/>
</dbReference>
<dbReference type="InterPro" id="IPR036440">
    <property type="entry name" value="Peptidase_C15-like_sf"/>
</dbReference>
<dbReference type="InterPro" id="IPR029762">
    <property type="entry name" value="PGP-I_bact-type"/>
</dbReference>
<dbReference type="InterPro" id="IPR033694">
    <property type="entry name" value="PGPEP1_Cys_AS"/>
</dbReference>
<dbReference type="InterPro" id="IPR033693">
    <property type="entry name" value="PGPEP1_Glu_AS"/>
</dbReference>
<dbReference type="NCBIfam" id="NF009673">
    <property type="entry name" value="PRK13194.1"/>
    <property type="match status" value="1"/>
</dbReference>
<dbReference type="NCBIfam" id="NF009676">
    <property type="entry name" value="PRK13197.1"/>
    <property type="match status" value="1"/>
</dbReference>
<dbReference type="NCBIfam" id="TIGR00504">
    <property type="entry name" value="pyro_pdase"/>
    <property type="match status" value="1"/>
</dbReference>
<dbReference type="PANTHER" id="PTHR23402">
    <property type="entry name" value="PROTEASE FAMILY C15 PYROGLUTAMYL-PEPTIDASE I-RELATED"/>
    <property type="match status" value="1"/>
</dbReference>
<dbReference type="PANTHER" id="PTHR23402:SF1">
    <property type="entry name" value="PYROGLUTAMYL-PEPTIDASE I"/>
    <property type="match status" value="1"/>
</dbReference>
<dbReference type="Pfam" id="PF01470">
    <property type="entry name" value="Peptidase_C15"/>
    <property type="match status" value="1"/>
</dbReference>
<dbReference type="PIRSF" id="PIRSF015592">
    <property type="entry name" value="Prld-crbxl_pptds"/>
    <property type="match status" value="1"/>
</dbReference>
<dbReference type="PRINTS" id="PR00706">
    <property type="entry name" value="PYROGLUPTASE"/>
</dbReference>
<dbReference type="SUPFAM" id="SSF53182">
    <property type="entry name" value="Pyrrolidone carboxyl peptidase (pyroglutamate aminopeptidase)"/>
    <property type="match status" value="1"/>
</dbReference>
<dbReference type="PROSITE" id="PS01334">
    <property type="entry name" value="PYRASE_CYS"/>
    <property type="match status" value="1"/>
</dbReference>
<dbReference type="PROSITE" id="PS01333">
    <property type="entry name" value="PYRASE_GLU"/>
    <property type="match status" value="1"/>
</dbReference>
<name>PCP_PYRAB</name>
<gene>
    <name type="primary">pcp</name>
    <name type="ordered locus">PYRAB14480</name>
    <name type="ORF">PAB1419</name>
</gene>
<reference key="1">
    <citation type="journal article" date="2003" name="Mol. Microbiol.">
        <title>An integrated analysis of the genome of the hyperthermophilic archaeon Pyrococcus abyssi.</title>
        <authorList>
            <person name="Cohen G.N."/>
            <person name="Barbe V."/>
            <person name="Flament D."/>
            <person name="Galperin M."/>
            <person name="Heilig R."/>
            <person name="Lecompte O."/>
            <person name="Poch O."/>
            <person name="Prieur D."/>
            <person name="Querellou J."/>
            <person name="Ripp R."/>
            <person name="Thierry J.-C."/>
            <person name="Van der Oost J."/>
            <person name="Weissenbach J."/>
            <person name="Zivanovic Y."/>
            <person name="Forterre P."/>
        </authorList>
    </citation>
    <scope>NUCLEOTIDE SEQUENCE [LARGE SCALE GENOMIC DNA]</scope>
    <source>
        <strain>GE5 / Orsay</strain>
    </source>
</reference>
<reference key="2">
    <citation type="journal article" date="2012" name="Curr. Microbiol.">
        <title>Re-annotation of two hyperthermophilic archaea Pyrococcus abyssi GE5 and Pyrococcus furiosus DSM 3638.</title>
        <authorList>
            <person name="Gao J."/>
            <person name="Wang J."/>
        </authorList>
    </citation>
    <scope>GENOME REANNOTATION</scope>
    <source>
        <strain>GE5 / Orsay</strain>
    </source>
</reference>
<protein>
    <recommendedName>
        <fullName>Pyrrolidone-carboxylate peptidase</fullName>
        <ecNumber>3.4.19.3</ecNumber>
    </recommendedName>
    <alternativeName>
        <fullName>5-oxoprolyl-peptidase</fullName>
    </alternativeName>
    <alternativeName>
        <fullName>Pyroglutamyl-peptidase I</fullName>
        <shortName>PGP-I</shortName>
        <shortName>Pyrase</shortName>
    </alternativeName>
</protein>
<organism>
    <name type="scientific">Pyrococcus abyssi (strain GE5 / Orsay)</name>
    <dbReference type="NCBI Taxonomy" id="272844"/>
    <lineage>
        <taxon>Archaea</taxon>
        <taxon>Methanobacteriati</taxon>
        <taxon>Methanobacteriota</taxon>
        <taxon>Thermococci</taxon>
        <taxon>Thermococcales</taxon>
        <taxon>Thermococcaceae</taxon>
        <taxon>Pyrococcus</taxon>
    </lineage>
</organism>
<accession>Q9UYQ9</accession>
<accession>G8ZIL1</accession>
<proteinExistence type="inferred from homology"/>
<sequence>MKVLVTGFEPFGGDDKNPTMEIVKFLDGKEIGGAKVIGRVLPVSFKRARKELVAILDEIKPDVTINLGLAPGRTHISVERVAVNIIDARIPDNDGEKPIDEPIVENGPAAYFATIPTREIVEEMKRNNIPAVLSYTAGTYLCNFVMYLTLHHSATKGYPRKAGFIHVPYTPDQVIEKKNTPSMSLELEIKGVEIAIRKSL</sequence>
<evidence type="ECO:0000250" key="1"/>
<evidence type="ECO:0000305" key="2"/>
<keyword id="KW-0963">Cytoplasm</keyword>
<keyword id="KW-0378">Hydrolase</keyword>
<keyword id="KW-0645">Protease</keyword>
<keyword id="KW-0788">Thiol protease</keyword>
<feature type="chain" id="PRO_0000184754" description="Pyrrolidone-carboxylate peptidase">
    <location>
        <begin position="1"/>
        <end position="200"/>
    </location>
</feature>
<feature type="active site" evidence="1">
    <location>
        <position position="79"/>
    </location>
</feature>
<feature type="active site" evidence="1">
    <location>
        <position position="142"/>
    </location>
</feature>
<feature type="active site" evidence="1">
    <location>
        <position position="166"/>
    </location>
</feature>